<gene>
    <name evidence="1" type="primary">ctaB</name>
    <name type="ordered locus">SPO3075</name>
</gene>
<organism>
    <name type="scientific">Ruegeria pomeroyi (strain ATCC 700808 / DSM 15171 / DSS-3)</name>
    <name type="common">Silicibacter pomeroyi</name>
    <dbReference type="NCBI Taxonomy" id="246200"/>
    <lineage>
        <taxon>Bacteria</taxon>
        <taxon>Pseudomonadati</taxon>
        <taxon>Pseudomonadota</taxon>
        <taxon>Alphaproteobacteria</taxon>
        <taxon>Rhodobacterales</taxon>
        <taxon>Roseobacteraceae</taxon>
        <taxon>Ruegeria</taxon>
    </lineage>
</organism>
<sequence length="318" mass="34406">MSDASFNASTARAAHRPDEAGFGDYFALLKPRVMSLVVFTALVGLVAAPVSVHPFIGFCAILFIAIGGGASGALNMWWDADIDQVMKRTKKRPIPAGKVEPGEALALGLGLSGLSVMMLALATNVLAGAFLAFTIFFYVVVYTMWLKRTTPQNIVIGGAAGAFPPVIGWIAATGDMSVEPWLMFALTFMWTPPHFWALALFMRSDYDDAGVPMLTVTHGRRATRVHILIYTILLALLALGTAFSNIGGPIYLAVALVLNALFLLGAIRIWRRDEADSEADNFKTERGFFKLSLLYLFLHFGAILAEALLRPYGLGGWG</sequence>
<comment type="function">
    <text evidence="1">Converts heme B (protoheme IX) to heme O by substitution of the vinyl group on carbon 2 of heme B porphyrin ring with a hydroxyethyl farnesyl side group.</text>
</comment>
<comment type="catalytic activity">
    <reaction evidence="1">
        <text>heme b + (2E,6E)-farnesyl diphosphate + H2O = Fe(II)-heme o + diphosphate</text>
        <dbReference type="Rhea" id="RHEA:28070"/>
        <dbReference type="ChEBI" id="CHEBI:15377"/>
        <dbReference type="ChEBI" id="CHEBI:33019"/>
        <dbReference type="ChEBI" id="CHEBI:60344"/>
        <dbReference type="ChEBI" id="CHEBI:60530"/>
        <dbReference type="ChEBI" id="CHEBI:175763"/>
        <dbReference type="EC" id="2.5.1.141"/>
    </reaction>
</comment>
<comment type="pathway">
    <text evidence="1">Porphyrin-containing compound metabolism; heme O biosynthesis; heme O from protoheme: step 1/1.</text>
</comment>
<comment type="subunit">
    <text evidence="1">Interacts with CtaA.</text>
</comment>
<comment type="subcellular location">
    <subcellularLocation>
        <location evidence="1">Cell inner membrane</location>
        <topology evidence="1">Multi-pass membrane protein</topology>
    </subcellularLocation>
</comment>
<comment type="miscellaneous">
    <text evidence="1">Carbon 2 of the heme B porphyrin ring is defined according to the Fischer nomenclature.</text>
</comment>
<comment type="similarity">
    <text evidence="1">Belongs to the UbiA prenyltransferase family. Protoheme IX farnesyltransferase subfamily.</text>
</comment>
<protein>
    <recommendedName>
        <fullName evidence="1">Protoheme IX farnesyltransferase</fullName>
        <ecNumber evidence="1">2.5.1.141</ecNumber>
    </recommendedName>
    <alternativeName>
        <fullName evidence="1">Heme B farnesyltransferase</fullName>
    </alternativeName>
    <alternativeName>
        <fullName evidence="1">Heme O synthase</fullName>
    </alternativeName>
</protein>
<accession>Q5LNX8</accession>
<name>COXX_RUEPO</name>
<evidence type="ECO:0000255" key="1">
    <source>
        <dbReference type="HAMAP-Rule" id="MF_00154"/>
    </source>
</evidence>
<keyword id="KW-0997">Cell inner membrane</keyword>
<keyword id="KW-1003">Cell membrane</keyword>
<keyword id="KW-0350">Heme biosynthesis</keyword>
<keyword id="KW-0472">Membrane</keyword>
<keyword id="KW-1185">Reference proteome</keyword>
<keyword id="KW-0808">Transferase</keyword>
<keyword id="KW-0812">Transmembrane</keyword>
<keyword id="KW-1133">Transmembrane helix</keyword>
<feature type="chain" id="PRO_0000327149" description="Protoheme IX farnesyltransferase">
    <location>
        <begin position="1"/>
        <end position="318"/>
    </location>
</feature>
<feature type="transmembrane region" description="Helical" evidence="1">
    <location>
        <begin position="33"/>
        <end position="53"/>
    </location>
</feature>
<feature type="transmembrane region" description="Helical" evidence="1">
    <location>
        <begin position="54"/>
        <end position="74"/>
    </location>
</feature>
<feature type="transmembrane region" description="Helical" evidence="1">
    <location>
        <begin position="102"/>
        <end position="122"/>
    </location>
</feature>
<feature type="transmembrane region" description="Helical" evidence="1">
    <location>
        <begin position="125"/>
        <end position="145"/>
    </location>
</feature>
<feature type="transmembrane region" description="Helical" evidence="1">
    <location>
        <begin position="154"/>
        <end position="174"/>
    </location>
</feature>
<feature type="transmembrane region" description="Helical" evidence="1">
    <location>
        <begin position="181"/>
        <end position="201"/>
    </location>
</feature>
<feature type="transmembrane region" description="Helical" evidence="1">
    <location>
        <begin position="225"/>
        <end position="245"/>
    </location>
</feature>
<feature type="transmembrane region" description="Helical" evidence="1">
    <location>
        <begin position="246"/>
        <end position="266"/>
    </location>
</feature>
<feature type="transmembrane region" description="Helical" evidence="1">
    <location>
        <begin position="288"/>
        <end position="308"/>
    </location>
</feature>
<reference key="1">
    <citation type="journal article" date="2004" name="Nature">
        <title>Genome sequence of Silicibacter pomeroyi reveals adaptations to the marine environment.</title>
        <authorList>
            <person name="Moran M.A."/>
            <person name="Buchan A."/>
            <person name="Gonzalez J.M."/>
            <person name="Heidelberg J.F."/>
            <person name="Whitman W.B."/>
            <person name="Kiene R.P."/>
            <person name="Henriksen J.R."/>
            <person name="King G.M."/>
            <person name="Belas R."/>
            <person name="Fuqua C."/>
            <person name="Brinkac L.M."/>
            <person name="Lewis M."/>
            <person name="Johri S."/>
            <person name="Weaver B."/>
            <person name="Pai G."/>
            <person name="Eisen J.A."/>
            <person name="Rahe E."/>
            <person name="Sheldon W.M."/>
            <person name="Ye W."/>
            <person name="Miller T.R."/>
            <person name="Carlton J."/>
            <person name="Rasko D.A."/>
            <person name="Paulsen I.T."/>
            <person name="Ren Q."/>
            <person name="Daugherty S.C."/>
            <person name="DeBoy R.T."/>
            <person name="Dodson R.J."/>
            <person name="Durkin A.S."/>
            <person name="Madupu R."/>
            <person name="Nelson W.C."/>
            <person name="Sullivan S.A."/>
            <person name="Rosovitz M.J."/>
            <person name="Haft D.H."/>
            <person name="Selengut J."/>
            <person name="Ward N."/>
        </authorList>
    </citation>
    <scope>NUCLEOTIDE SEQUENCE [LARGE SCALE GENOMIC DNA]</scope>
    <source>
        <strain>ATCC 700808 / DSM 15171 / DSS-3</strain>
    </source>
</reference>
<reference key="2">
    <citation type="journal article" date="2014" name="Stand. Genomic Sci.">
        <title>An updated genome annotation for the model marine bacterium Ruegeria pomeroyi DSS-3.</title>
        <authorList>
            <person name="Rivers A.R."/>
            <person name="Smith C.B."/>
            <person name="Moran M.A."/>
        </authorList>
    </citation>
    <scope>GENOME REANNOTATION</scope>
    <source>
        <strain>ATCC 700808 / DSM 15171 / DSS-3</strain>
    </source>
</reference>
<proteinExistence type="inferred from homology"/>
<dbReference type="EC" id="2.5.1.141" evidence="1"/>
<dbReference type="EMBL" id="CP000031">
    <property type="protein sequence ID" value="AAV96310.1"/>
    <property type="molecule type" value="Genomic_DNA"/>
</dbReference>
<dbReference type="RefSeq" id="WP_011048768.1">
    <property type="nucleotide sequence ID" value="NC_003911.12"/>
</dbReference>
<dbReference type="SMR" id="Q5LNX8"/>
<dbReference type="STRING" id="246200.SPO3075"/>
<dbReference type="PaxDb" id="246200-SPO3075"/>
<dbReference type="KEGG" id="sil:SPO3075"/>
<dbReference type="eggNOG" id="COG0109">
    <property type="taxonomic scope" value="Bacteria"/>
</dbReference>
<dbReference type="HOGENOM" id="CLU_029631_0_2_5"/>
<dbReference type="OrthoDB" id="9814417at2"/>
<dbReference type="UniPathway" id="UPA00834">
    <property type="reaction ID" value="UER00712"/>
</dbReference>
<dbReference type="Proteomes" id="UP000001023">
    <property type="component" value="Chromosome"/>
</dbReference>
<dbReference type="GO" id="GO:0005886">
    <property type="term" value="C:plasma membrane"/>
    <property type="evidence" value="ECO:0007669"/>
    <property type="project" value="UniProtKB-SubCell"/>
</dbReference>
<dbReference type="GO" id="GO:0008495">
    <property type="term" value="F:protoheme IX farnesyltransferase activity"/>
    <property type="evidence" value="ECO:0007669"/>
    <property type="project" value="UniProtKB-UniRule"/>
</dbReference>
<dbReference type="GO" id="GO:0048034">
    <property type="term" value="P:heme O biosynthetic process"/>
    <property type="evidence" value="ECO:0007669"/>
    <property type="project" value="UniProtKB-UniRule"/>
</dbReference>
<dbReference type="CDD" id="cd13957">
    <property type="entry name" value="PT_UbiA_Cox10"/>
    <property type="match status" value="1"/>
</dbReference>
<dbReference type="Gene3D" id="1.10.357.140">
    <property type="entry name" value="UbiA prenyltransferase"/>
    <property type="match status" value="1"/>
</dbReference>
<dbReference type="HAMAP" id="MF_00154">
    <property type="entry name" value="CyoE_CtaB"/>
    <property type="match status" value="1"/>
</dbReference>
<dbReference type="InterPro" id="IPR006369">
    <property type="entry name" value="Protohaem_IX_farnesylTrfase"/>
</dbReference>
<dbReference type="InterPro" id="IPR000537">
    <property type="entry name" value="UbiA_prenyltransferase"/>
</dbReference>
<dbReference type="InterPro" id="IPR030470">
    <property type="entry name" value="UbiA_prenylTrfase_CS"/>
</dbReference>
<dbReference type="InterPro" id="IPR044878">
    <property type="entry name" value="UbiA_sf"/>
</dbReference>
<dbReference type="NCBIfam" id="TIGR01473">
    <property type="entry name" value="cyoE_ctaB"/>
    <property type="match status" value="1"/>
</dbReference>
<dbReference type="NCBIfam" id="NF003349">
    <property type="entry name" value="PRK04375.1-2"/>
    <property type="match status" value="1"/>
</dbReference>
<dbReference type="PANTHER" id="PTHR43448:SF7">
    <property type="entry name" value="4-HYDROXYBENZOATE SOLANESYLTRANSFERASE"/>
    <property type="match status" value="1"/>
</dbReference>
<dbReference type="PANTHER" id="PTHR43448">
    <property type="entry name" value="PROTOHEME IX FARNESYLTRANSFERASE, MITOCHONDRIAL"/>
    <property type="match status" value="1"/>
</dbReference>
<dbReference type="Pfam" id="PF01040">
    <property type="entry name" value="UbiA"/>
    <property type="match status" value="1"/>
</dbReference>
<dbReference type="PROSITE" id="PS00943">
    <property type="entry name" value="UBIA"/>
    <property type="match status" value="1"/>
</dbReference>